<dbReference type="EMBL" id="AF338453">
    <property type="protein sequence ID" value="AAL23421.1"/>
    <property type="molecule type" value="mRNA"/>
</dbReference>
<dbReference type="EMBL" id="AF338456">
    <property type="protein sequence ID" value="AAL23424.1"/>
    <property type="molecule type" value="mRNA"/>
</dbReference>
<dbReference type="EMBL" id="AF338457">
    <property type="protein sequence ID" value="AAL23425.1"/>
    <property type="molecule type" value="mRNA"/>
</dbReference>
<dbReference type="EMBL" id="AF338458">
    <property type="protein sequence ID" value="AAL23426.1"/>
    <property type="molecule type" value="mRNA"/>
</dbReference>
<dbReference type="EMBL" id="AF338459">
    <property type="protein sequence ID" value="AAL23427.1"/>
    <property type="molecule type" value="mRNA"/>
</dbReference>
<dbReference type="PDB" id="1JZA">
    <property type="method" value="X-ray"/>
    <property type="resolution" value="2.20 A"/>
    <property type="chains" value="A/B=20-85"/>
</dbReference>
<dbReference type="PDB" id="1JZB">
    <property type="method" value="X-ray"/>
    <property type="resolution" value="2.81 A"/>
    <property type="chains" value="A=20-85"/>
</dbReference>
<dbReference type="PDBsum" id="1JZA"/>
<dbReference type="PDBsum" id="1JZB"/>
<dbReference type="SMR" id="P01493"/>
<dbReference type="EvolutionaryTrace" id="P01493"/>
<dbReference type="GO" id="GO:0005576">
    <property type="term" value="C:extracellular region"/>
    <property type="evidence" value="ECO:0007669"/>
    <property type="project" value="UniProtKB-SubCell"/>
</dbReference>
<dbReference type="GO" id="GO:0019871">
    <property type="term" value="F:sodium channel inhibitor activity"/>
    <property type="evidence" value="ECO:0007669"/>
    <property type="project" value="InterPro"/>
</dbReference>
<dbReference type="GO" id="GO:0090729">
    <property type="term" value="F:toxin activity"/>
    <property type="evidence" value="ECO:0007669"/>
    <property type="project" value="UniProtKB-KW"/>
</dbReference>
<dbReference type="GO" id="GO:0006952">
    <property type="term" value="P:defense response"/>
    <property type="evidence" value="ECO:0007669"/>
    <property type="project" value="InterPro"/>
</dbReference>
<dbReference type="CDD" id="cd23106">
    <property type="entry name" value="neurotoxins_LC_scorpion"/>
    <property type="match status" value="1"/>
</dbReference>
<dbReference type="FunFam" id="3.30.30.10:FF:000002">
    <property type="entry name" value="Alpha-like toxin BmK-M1"/>
    <property type="match status" value="1"/>
</dbReference>
<dbReference type="Gene3D" id="3.30.30.10">
    <property type="entry name" value="Knottin, scorpion toxin-like"/>
    <property type="match status" value="1"/>
</dbReference>
<dbReference type="InterPro" id="IPR044062">
    <property type="entry name" value="LCN-type_CS_alpha_beta_dom"/>
</dbReference>
<dbReference type="InterPro" id="IPR003614">
    <property type="entry name" value="Scorpion_toxin-like"/>
</dbReference>
<dbReference type="InterPro" id="IPR036574">
    <property type="entry name" value="Scorpion_toxin-like_sf"/>
</dbReference>
<dbReference type="InterPro" id="IPR018218">
    <property type="entry name" value="Scorpion_toxinL"/>
</dbReference>
<dbReference type="InterPro" id="IPR002061">
    <property type="entry name" value="Scorpion_toxinL/defensin"/>
</dbReference>
<dbReference type="Pfam" id="PF00537">
    <property type="entry name" value="Toxin_3"/>
    <property type="match status" value="1"/>
</dbReference>
<dbReference type="PRINTS" id="PR00285">
    <property type="entry name" value="SCORPNTOXIN"/>
</dbReference>
<dbReference type="SMART" id="SM00505">
    <property type="entry name" value="Knot1"/>
    <property type="match status" value="1"/>
</dbReference>
<dbReference type="SUPFAM" id="SSF57095">
    <property type="entry name" value="Scorpion toxin-like"/>
    <property type="match status" value="1"/>
</dbReference>
<dbReference type="PROSITE" id="PS51863">
    <property type="entry name" value="LCN_CSAB"/>
    <property type="match status" value="1"/>
</dbReference>
<evidence type="ECO:0000250" key="1"/>
<evidence type="ECO:0000255" key="2">
    <source>
        <dbReference type="PROSITE-ProRule" id="PRU01210"/>
    </source>
</evidence>
<evidence type="ECO:0000269" key="3">
    <source>
    </source>
</evidence>
<evidence type="ECO:0000269" key="4">
    <source>
    </source>
</evidence>
<evidence type="ECO:0000303" key="5">
    <source>
    </source>
</evidence>
<evidence type="ECO:0000303" key="6">
    <source>
    </source>
</evidence>
<evidence type="ECO:0000303" key="7">
    <source>
    </source>
</evidence>
<evidence type="ECO:0000305" key="8"/>
<evidence type="ECO:0007744" key="9">
    <source>
        <dbReference type="PDB" id="1JZA"/>
    </source>
</evidence>
<evidence type="ECO:0007744" key="10">
    <source>
        <dbReference type="PDB" id="1JZB"/>
    </source>
</evidence>
<evidence type="ECO:0007829" key="11">
    <source>
        <dbReference type="PDB" id="1JZA"/>
    </source>
</evidence>
<comment type="function">
    <text evidence="1 4">Beta toxins bind voltage-independently at site-4 of sodium channels (Nav) and shift the voltage of activation toward more negative potentials thereby affecting sodium channel activation and promoting spontaneous and repetitive firing (By similarity). Induces immediate paralysis in crickets after injection, with a total paralysis occurring within 15-30 minutes and lasting for 1-2 hours. Is also lethal to vertebrate (chicks) when injected in very high dosages (more that 100 mg/kg).</text>
</comment>
<comment type="subcellular location">
    <subcellularLocation>
        <location evidence="4">Secreted</location>
    </subcellularLocation>
</comment>
<comment type="tissue specificity">
    <text evidence="4">Expressed by the venom gland.</text>
</comment>
<comment type="domain">
    <text evidence="8">Has the structural arrangement of an alpha-helix connected to antiparallel beta-sheets by disulfide bonds (CS-alpha/beta).</text>
</comment>
<comment type="toxic dose">
    <text evidence="4">PD(50) is 21.5 mg/kg of insects (crickets).</text>
</comment>
<comment type="similarity">
    <text evidence="8">Belongs to the long (4 C-C) scorpion toxin superfamily. Sodium channel inhibitor family. Beta subfamily.</text>
</comment>
<protein>
    <recommendedName>
        <fullName evidence="5">Toxin CsEv2</fullName>
        <shortName evidence="6">CsE-v2</shortName>
    </recommendedName>
    <alternativeName>
        <fullName evidence="7">Neurotoxin 2</fullName>
    </alternativeName>
</protein>
<proteinExistence type="evidence at protein level"/>
<sequence length="87" mass="9520">MNSLLIITACLFLIGTVWAKEGYLVNKSTGCKYGCLKLGENEGCDKECKAKNQGGSYGYCYAFACWCEGLPESTPTYPLPNKSCSRK</sequence>
<reference key="1">
    <citation type="journal article" date="2001" name="Toxicon">
        <title>Genes and peptides from the scorpion Centruroides sculpturatus Ewing, that recognize Na(+)-channels.</title>
        <authorList>
            <person name="Corona M."/>
            <person name="Valdez-Cruz N.A."/>
            <person name="Merino E."/>
            <person name="Zurita M."/>
            <person name="Possani L.D."/>
        </authorList>
    </citation>
    <scope>NUCLEOTIDE SEQUENCE [MRNA]</scope>
    <source>
        <tissue>Venom gland</tissue>
    </source>
</reference>
<reference key="2">
    <citation type="journal article" date="1974" name="Arch. Biochem. Biophys.">
        <title>Amino acid sequences of neurotoxic protein variants from the venom of Centruroides sculpturatus Ewing.</title>
        <authorList>
            <person name="Babin D.R."/>
            <person name="Watt D.D."/>
            <person name="Goos S.M."/>
            <person name="Mlejnek R.V."/>
        </authorList>
    </citation>
    <scope>PROTEIN SEQUENCE OF 20-85</scope>
    <scope>FUNCTION</scope>
    <scope>SUBCELLULAR LOCATION</scope>
    <scope>TISSUE SPECIFICITY</scope>
    <scope>TOXIC DOSE</scope>
    <source>
        <tissue>Venom</tissue>
    </source>
</reference>
<reference key="3">
    <citation type="journal article" date="2002" name="Protein Sci.">
        <title>Structure of variant 2 scorpion toxin from Centruroides sculpturatus Ewing.</title>
        <authorList>
            <person name="Cook W.J."/>
            <person name="Zell A."/>
            <person name="Watt D.D."/>
            <person name="Ealick S.E."/>
        </authorList>
    </citation>
    <scope>X-RAY CRYSTALLOGRAPHY (2.2 ANGSTROMS) OF 20-85</scope>
    <scope>DISULFIDE BONDS</scope>
    <source>
        <tissue>Venom</tissue>
    </source>
</reference>
<name>SCX2_CENSC</name>
<keyword id="KW-0002">3D-structure</keyword>
<keyword id="KW-0903">Direct protein sequencing</keyword>
<keyword id="KW-1015">Disulfide bond</keyword>
<keyword id="KW-0872">Ion channel impairing toxin</keyword>
<keyword id="KW-0528">Neurotoxin</keyword>
<keyword id="KW-0964">Secreted</keyword>
<keyword id="KW-0732">Signal</keyword>
<keyword id="KW-0800">Toxin</keyword>
<keyword id="KW-0738">Voltage-gated sodium channel impairing toxin</keyword>
<organism>
    <name type="scientific">Centruroides sculpturatus</name>
    <name type="common">Arizona bark scorpion</name>
    <dbReference type="NCBI Taxonomy" id="218467"/>
    <lineage>
        <taxon>Eukaryota</taxon>
        <taxon>Metazoa</taxon>
        <taxon>Ecdysozoa</taxon>
        <taxon>Arthropoda</taxon>
        <taxon>Chelicerata</taxon>
        <taxon>Arachnida</taxon>
        <taxon>Scorpiones</taxon>
        <taxon>Buthida</taxon>
        <taxon>Buthoidea</taxon>
        <taxon>Buthidae</taxon>
        <taxon>Centruroides</taxon>
    </lineage>
</organism>
<accession>P01493</accession>
<accession>Q95WC2</accession>
<accession>Q95WC3</accession>
<accession>Q95WC4</accession>
<accession>Q95WC5</accession>
<accession>Q95WC8</accession>
<feature type="signal peptide" evidence="4">
    <location>
        <begin position="1"/>
        <end position="19"/>
    </location>
</feature>
<feature type="peptide" id="PRO_0000035289" description="Toxin CsEv2">
    <location>
        <begin position="20"/>
        <end position="85"/>
    </location>
</feature>
<feature type="domain" description="LCN-type CS-alpha/beta" evidence="2">
    <location>
        <begin position="20"/>
        <end position="85"/>
    </location>
</feature>
<feature type="disulfide bond" evidence="3 9 10">
    <location>
        <begin position="31"/>
        <end position="84"/>
    </location>
</feature>
<feature type="disulfide bond" evidence="3 9 10">
    <location>
        <begin position="35"/>
        <end position="60"/>
    </location>
</feature>
<feature type="disulfide bond" evidence="3 9 10">
    <location>
        <begin position="44"/>
        <end position="65"/>
    </location>
</feature>
<feature type="disulfide bond" evidence="3 9 10">
    <location>
        <begin position="48"/>
        <end position="67"/>
    </location>
</feature>
<feature type="sequence variant" description="In CsEv2B and CsEv2D.">
    <original>I</original>
    <variation>M</variation>
    <location>
        <position position="6"/>
    </location>
</feature>
<feature type="sequence variant" description="In CsEv2A*.">
    <original>LFLI</original>
    <variation>FALV</variation>
    <location>
        <begin position="11"/>
        <end position="14"/>
    </location>
</feature>
<feature type="sequence variant" description="In CsEv2B.">
    <original>K</original>
    <variation>R</variation>
    <location>
        <position position="20"/>
    </location>
</feature>
<feature type="sequence variant" description="In CsEv2D.">
    <original>G</original>
    <variation>A</variation>
    <location>
        <position position="30"/>
    </location>
</feature>
<feature type="sequence variant" description="In CsEv2C.">
    <original>K</original>
    <variation>E</variation>
    <location>
        <position position="51"/>
    </location>
</feature>
<feature type="sequence conflict" description="In Ref. 2; AA sequence." evidence="8" ref="2">
    <original>CDK</original>
    <variation>NKC</variation>
    <location>
        <begin position="44"/>
        <end position="46"/>
    </location>
</feature>
<feature type="sequence conflict" description="In Ref. 2; AA sequence." evidence="8" ref="2">
    <original>SC</original>
    <variation>CS</variation>
    <location>
        <begin position="83"/>
        <end position="84"/>
    </location>
</feature>
<feature type="turn" evidence="11">
    <location>
        <begin position="27"/>
        <end position="29"/>
    </location>
</feature>
<feature type="helix" evidence="11">
    <location>
        <begin position="42"/>
        <end position="49"/>
    </location>
</feature>
<feature type="turn" evidence="11">
    <location>
        <begin position="51"/>
        <end position="53"/>
    </location>
</feature>
<feature type="strand" evidence="11">
    <location>
        <begin position="56"/>
        <end position="60"/>
    </location>
</feature>
<feature type="strand" evidence="11">
    <location>
        <begin position="62"/>
        <end position="69"/>
    </location>
</feature>
<feature type="strand" evidence="11">
    <location>
        <begin position="77"/>
        <end position="79"/>
    </location>
</feature>